<name>GPA11_CAEEL</name>
<dbReference type="EMBL" id="AY008133">
    <property type="protein sequence ID" value="AAG32086.1"/>
    <property type="molecule type" value="mRNA"/>
</dbReference>
<dbReference type="EMBL" id="FO080260">
    <property type="protein sequence ID" value="CCD62416.1"/>
    <property type="molecule type" value="Genomic_DNA"/>
</dbReference>
<dbReference type="EMBL" id="FO080260">
    <property type="protein sequence ID" value="CCD62417.1"/>
    <property type="molecule type" value="Genomic_DNA"/>
</dbReference>
<dbReference type="RefSeq" id="NP_001254088.1">
    <molecule id="O76584-2"/>
    <property type="nucleotide sequence ID" value="NM_001267159.1"/>
</dbReference>
<dbReference type="RefSeq" id="NP_001254089.1">
    <molecule id="O76584-1"/>
    <property type="nucleotide sequence ID" value="NM_001267160.2"/>
</dbReference>
<dbReference type="SMR" id="O76584"/>
<dbReference type="FunCoup" id="O76584">
    <property type="interactions" value="5"/>
</dbReference>
<dbReference type="STRING" id="6239.C16A11.1b.1"/>
<dbReference type="PaxDb" id="6239-C16A11.1b"/>
<dbReference type="EnsemblMetazoa" id="C16A11.1a.1">
    <molecule id="O76584-1"/>
    <property type="protein sequence ID" value="C16A11.1a.1"/>
    <property type="gene ID" value="WBGene00001673"/>
</dbReference>
<dbReference type="EnsemblMetazoa" id="C16A11.1a.2">
    <molecule id="O76584-1"/>
    <property type="protein sequence ID" value="C16A11.1a.2"/>
    <property type="gene ID" value="WBGene00001673"/>
</dbReference>
<dbReference type="EnsemblMetazoa" id="C16A11.1b.1">
    <molecule id="O76584-2"/>
    <property type="protein sequence ID" value="C16A11.1b.1"/>
    <property type="gene ID" value="WBGene00001673"/>
</dbReference>
<dbReference type="GeneID" id="173759"/>
<dbReference type="KEGG" id="cel:CELE_C16A11.1"/>
<dbReference type="UCSC" id="C16A11.1">
    <molecule id="O76584-1"/>
    <property type="organism name" value="c. elegans"/>
</dbReference>
<dbReference type="AGR" id="WB:WBGene00001673"/>
<dbReference type="CTD" id="173759"/>
<dbReference type="WormBase" id="C16A11.1a">
    <molecule id="O76584-1"/>
    <property type="protein sequence ID" value="CE20515"/>
    <property type="gene ID" value="WBGene00001673"/>
    <property type="gene designation" value="gpa-11"/>
</dbReference>
<dbReference type="WormBase" id="C16A11.1b">
    <molecule id="O76584-2"/>
    <property type="protein sequence ID" value="CE45827"/>
    <property type="gene ID" value="WBGene00001673"/>
    <property type="gene designation" value="gpa-11"/>
</dbReference>
<dbReference type="eggNOG" id="KOG0082">
    <property type="taxonomic scope" value="Eukaryota"/>
</dbReference>
<dbReference type="GeneTree" id="ENSGT00970000196059"/>
<dbReference type="HOGENOM" id="CLU_014184_5_0_1"/>
<dbReference type="InParanoid" id="O76584"/>
<dbReference type="OMA" id="VVFKISM"/>
<dbReference type="OrthoDB" id="5817230at2759"/>
<dbReference type="PhylomeDB" id="O76584"/>
<dbReference type="PRO" id="PR:O76584"/>
<dbReference type="Proteomes" id="UP000001940">
    <property type="component" value="Chromosome II"/>
</dbReference>
<dbReference type="GO" id="GO:0005737">
    <property type="term" value="C:cytoplasm"/>
    <property type="evidence" value="ECO:0000318"/>
    <property type="project" value="GO_Central"/>
</dbReference>
<dbReference type="GO" id="GO:0005834">
    <property type="term" value="C:heterotrimeric G-protein complex"/>
    <property type="evidence" value="ECO:0000250"/>
    <property type="project" value="WormBase"/>
</dbReference>
<dbReference type="GO" id="GO:0001664">
    <property type="term" value="F:G protein-coupled receptor binding"/>
    <property type="evidence" value="ECO:0000318"/>
    <property type="project" value="GO_Central"/>
</dbReference>
<dbReference type="GO" id="GO:0031683">
    <property type="term" value="F:G-protein beta/gamma-subunit complex binding"/>
    <property type="evidence" value="ECO:0000318"/>
    <property type="project" value="GO_Central"/>
</dbReference>
<dbReference type="GO" id="GO:0005525">
    <property type="term" value="F:GTP binding"/>
    <property type="evidence" value="ECO:0007669"/>
    <property type="project" value="UniProtKB-KW"/>
</dbReference>
<dbReference type="GO" id="GO:0003924">
    <property type="term" value="F:GTPase activity"/>
    <property type="evidence" value="ECO:0000250"/>
    <property type="project" value="WormBase"/>
</dbReference>
<dbReference type="GO" id="GO:0046872">
    <property type="term" value="F:metal ion binding"/>
    <property type="evidence" value="ECO:0007669"/>
    <property type="project" value="UniProtKB-KW"/>
</dbReference>
<dbReference type="GO" id="GO:0007188">
    <property type="term" value="P:adenylate cyclase-modulating G protein-coupled receptor signaling pathway"/>
    <property type="evidence" value="ECO:0000318"/>
    <property type="project" value="GO_Central"/>
</dbReference>
<dbReference type="GO" id="GO:0008340">
    <property type="term" value="P:determination of adult lifespan"/>
    <property type="evidence" value="ECO:0000315"/>
    <property type="project" value="UniProtKB"/>
</dbReference>
<dbReference type="GO" id="GO:0007186">
    <property type="term" value="P:G protein-coupled receptor signaling pathway"/>
    <property type="evidence" value="ECO:0000250"/>
    <property type="project" value="WormBase"/>
</dbReference>
<dbReference type="GO" id="GO:0007210">
    <property type="term" value="P:serotonin receptor signaling pathway"/>
    <property type="evidence" value="ECO:0000315"/>
    <property type="project" value="UniProtKB"/>
</dbReference>
<dbReference type="CDD" id="cd00066">
    <property type="entry name" value="G-alpha"/>
    <property type="match status" value="1"/>
</dbReference>
<dbReference type="FunFam" id="3.40.50.300:FF:000181">
    <property type="entry name" value="Guanine nucleotide-binding protein subunit alpha"/>
    <property type="match status" value="1"/>
</dbReference>
<dbReference type="Gene3D" id="1.10.400.10">
    <property type="entry name" value="GI Alpha 1, domain 2-like"/>
    <property type="match status" value="1"/>
</dbReference>
<dbReference type="Gene3D" id="3.40.50.300">
    <property type="entry name" value="P-loop containing nucleotide triphosphate hydrolases"/>
    <property type="match status" value="1"/>
</dbReference>
<dbReference type="InterPro" id="IPR001019">
    <property type="entry name" value="Gprotein_alpha_su"/>
</dbReference>
<dbReference type="InterPro" id="IPR011025">
    <property type="entry name" value="GproteinA_insert"/>
</dbReference>
<dbReference type="InterPro" id="IPR027417">
    <property type="entry name" value="P-loop_NTPase"/>
</dbReference>
<dbReference type="PANTHER" id="PTHR10218">
    <property type="entry name" value="GTP-BINDING PROTEIN ALPHA SUBUNIT"/>
    <property type="match status" value="1"/>
</dbReference>
<dbReference type="PANTHER" id="PTHR10218:SF353">
    <property type="entry name" value="GUANINE NUCLEOTIDE-BINDING PROTEIN ALPHA-11 SUBUNIT"/>
    <property type="match status" value="1"/>
</dbReference>
<dbReference type="Pfam" id="PF00503">
    <property type="entry name" value="G-alpha"/>
    <property type="match status" value="1"/>
</dbReference>
<dbReference type="PRINTS" id="PR00318">
    <property type="entry name" value="GPROTEINA"/>
</dbReference>
<dbReference type="SMART" id="SM00275">
    <property type="entry name" value="G_alpha"/>
    <property type="match status" value="1"/>
</dbReference>
<dbReference type="SUPFAM" id="SSF52540">
    <property type="entry name" value="P-loop containing nucleoside triphosphate hydrolases"/>
    <property type="match status" value="1"/>
</dbReference>
<dbReference type="SUPFAM" id="SSF47895">
    <property type="entry name" value="Transducin (alpha subunit), insertion domain"/>
    <property type="match status" value="1"/>
</dbReference>
<dbReference type="PROSITE" id="PS51882">
    <property type="entry name" value="G_ALPHA"/>
    <property type="match status" value="1"/>
</dbReference>
<sequence length="363" mass="42232">MSAADMARKNSLINRQLEKEKIDSKKMLKILLLGGPECGKSTIFKQMKIIHMNGFSDLDYVNFRYLIYSNIMQSMDQLLEAAEFFHFPPDDSPSIRRALNHYKSYKVRYSTSEVELNRELADSLSKLYNAEFIKSVLNRKNELKLLDSAVYFLDDIDRISAHEYKPTEMDVLRARVPTTGITEIEFPFKQASLRMVDVGGQRSEQRKWIHCFDNVNGVLFIAAISGYNLYDEDEENRKDDGTPTKTNRLRYSMELFKRIANHQCFSKKTAMILFLNKIDIFKEKIGKYPLTTCFKNYKGVNAFEPACKYVTDRFSRLVSGDIQHEKPLYTHITNATDTRNIDRVFDSCMDVIFKISMEKVGFM</sequence>
<organism>
    <name type="scientific">Caenorhabditis elegans</name>
    <dbReference type="NCBI Taxonomy" id="6239"/>
    <lineage>
        <taxon>Eukaryota</taxon>
        <taxon>Metazoa</taxon>
        <taxon>Ecdysozoa</taxon>
        <taxon>Nematoda</taxon>
        <taxon>Chromadorea</taxon>
        <taxon>Rhabditida</taxon>
        <taxon>Rhabditina</taxon>
        <taxon>Rhabditomorpha</taxon>
        <taxon>Rhabditoidea</taxon>
        <taxon>Rhabditidae</taxon>
        <taxon>Peloderinae</taxon>
        <taxon>Caenorhabditis</taxon>
    </lineage>
</organism>
<comment type="function">
    <text evidence="4 5">Guanine nucleotide-binding proteins (G proteins) are involved as modulators or transducers in various transmembrane signaling systems. Mediates the transduction of food and serotonin signals, which modulates the avoidance response to the odorant octanol. Has a role in lifespan to promote longevity.</text>
</comment>
<comment type="subunit">
    <text>G proteins are composed of 3 units; alpha, beta and gamma. The alpha chain contains the guanine nucleotide binding site.</text>
</comment>
<comment type="alternative products">
    <event type="alternative splicing"/>
    <isoform>
        <id>O76584-1</id>
        <name>a</name>
        <sequence type="displayed"/>
    </isoform>
    <isoform>
        <id>O76584-2</id>
        <name>b</name>
        <sequence type="described" ref="VSP_043928"/>
    </isoform>
</comment>
<comment type="tissue specificity">
    <text evidence="3">Expressed in ADL and ASH neurons.</text>
</comment>
<comment type="disruption phenotype">
    <text evidence="5">Slow to respond to octanol.</text>
</comment>
<comment type="similarity">
    <text evidence="6">Belongs to the G-alpha family.</text>
</comment>
<protein>
    <recommendedName>
        <fullName>Guanine nucleotide-binding protein alpha-11 subunit</fullName>
    </recommendedName>
</protein>
<reference key="1">
    <citation type="submission" date="2000-09" db="EMBL/GenBank/DDBJ databases">
        <title>Interaction analysis of the complete G-alpha subfamily of heterotrimeric G proteins from Caenorhabditis elegans.</title>
        <authorList>
            <person name="Cuppen E."/>
            <person name="Jansen G."/>
            <person name="Plasterk R.H.A."/>
        </authorList>
    </citation>
    <scope>NUCLEOTIDE SEQUENCE [MRNA] (ISOFORM A)</scope>
    <source>
        <strain>Bristol N2</strain>
    </source>
</reference>
<reference key="2">
    <citation type="journal article" date="1998" name="Science">
        <title>Genome sequence of the nematode C. elegans: a platform for investigating biology.</title>
        <authorList>
            <consortium name="The C. elegans sequencing consortium"/>
        </authorList>
    </citation>
    <scope>NUCLEOTIDE SEQUENCE [LARGE SCALE GENOMIC DNA]</scope>
    <scope>ALTERNATIVE SPLICING</scope>
    <source>
        <strain>Bristol N2</strain>
    </source>
</reference>
<reference key="3">
    <citation type="journal article" date="1997" name="Nat. Genet.">
        <title>Reverse genetics by chemical mutagenesis in Caenorhabditis elegans.</title>
        <authorList>
            <person name="Jansen G."/>
            <person name="Hazendonk E."/>
            <person name="Thijssen K.L."/>
            <person name="Plasterk R.H."/>
        </authorList>
    </citation>
    <scope>IDENTIFICATION</scope>
</reference>
<reference key="4">
    <citation type="journal article" date="1999" name="Nat. Genet.">
        <title>The complete family of genes encoding G proteins of Caenorhabditis elegans.</title>
        <authorList>
            <person name="Jansen G."/>
            <person name="Thijssen K.L."/>
            <person name="Werner P."/>
            <person name="van der Horst M."/>
            <person name="Hazendonk E."/>
            <person name="Plasterk R.H.A."/>
        </authorList>
    </citation>
    <scope>GENE FAMILY</scope>
    <scope>NOMENCLATURE</scope>
    <scope>TISSUE SPECIFICITY</scope>
</reference>
<reference key="5">
    <citation type="journal article" date="2004" name="Proc. Natl. Acad. Sci. U.S.A.">
        <title>Feeding status and serotonin rapidly and reversibly modulate a Caenorhabditis elegans chemosensory circuit.</title>
        <authorList>
            <person name="Chao M.Y."/>
            <person name="Komatsu H."/>
            <person name="Fukuto H.S."/>
            <person name="Dionne H.M."/>
            <person name="Hart A.C."/>
        </authorList>
    </citation>
    <scope>FUNCTION</scope>
</reference>
<reference key="6">
    <citation type="journal article" date="2007" name="Dev. Biol.">
        <title>Multiple sensory G proteins in the olfactory, gustatory and nociceptive neurons modulate longevity in Caenorhabditis elegans.</title>
        <authorList>
            <person name="Lans H."/>
            <person name="Jansen G."/>
        </authorList>
    </citation>
    <scope>FUNCTION</scope>
    <scope>DISRUPTION PHENOTYPE</scope>
</reference>
<feature type="chain" id="PRO_0000203647" description="Guanine nucleotide-binding protein alpha-11 subunit">
    <location>
        <begin position="1"/>
        <end position="363"/>
    </location>
</feature>
<feature type="domain" description="G-alpha" evidence="2">
    <location>
        <begin position="26"/>
        <end position="363"/>
    </location>
</feature>
<feature type="region of interest" description="G1 motif" evidence="2">
    <location>
        <begin position="29"/>
        <end position="42"/>
    </location>
</feature>
<feature type="region of interest" description="G2 motif" evidence="2">
    <location>
        <begin position="170"/>
        <end position="178"/>
    </location>
</feature>
<feature type="region of interest" description="G3 motif" evidence="2">
    <location>
        <begin position="193"/>
        <end position="202"/>
    </location>
</feature>
<feature type="region of interest" description="G4 motif" evidence="2">
    <location>
        <begin position="272"/>
        <end position="279"/>
    </location>
</feature>
<feature type="region of interest" description="G5 motif" evidence="2">
    <location>
        <begin position="333"/>
        <end position="338"/>
    </location>
</feature>
<feature type="binding site" evidence="1">
    <location>
        <begin position="34"/>
        <end position="41"/>
    </location>
    <ligand>
        <name>GTP</name>
        <dbReference type="ChEBI" id="CHEBI:37565"/>
    </ligand>
</feature>
<feature type="binding site" evidence="1">
    <location>
        <position position="41"/>
    </location>
    <ligand>
        <name>Mg(2+)</name>
        <dbReference type="ChEBI" id="CHEBI:18420"/>
    </ligand>
</feature>
<feature type="binding site" evidence="1">
    <location>
        <begin position="172"/>
        <end position="178"/>
    </location>
    <ligand>
        <name>GTP</name>
        <dbReference type="ChEBI" id="CHEBI:37565"/>
    </ligand>
</feature>
<feature type="binding site" evidence="1">
    <location>
        <position position="178"/>
    </location>
    <ligand>
        <name>Mg(2+)</name>
        <dbReference type="ChEBI" id="CHEBI:18420"/>
    </ligand>
</feature>
<feature type="binding site" evidence="1">
    <location>
        <begin position="197"/>
        <end position="201"/>
    </location>
    <ligand>
        <name>GTP</name>
        <dbReference type="ChEBI" id="CHEBI:37565"/>
    </ligand>
</feature>
<feature type="binding site" evidence="1">
    <location>
        <begin position="276"/>
        <end position="279"/>
    </location>
    <ligand>
        <name>GTP</name>
        <dbReference type="ChEBI" id="CHEBI:37565"/>
    </ligand>
</feature>
<feature type="binding site" evidence="1">
    <location>
        <position position="335"/>
    </location>
    <ligand>
        <name>GTP</name>
        <dbReference type="ChEBI" id="CHEBI:37565"/>
    </ligand>
</feature>
<feature type="splice variant" id="VSP_043928" description="In isoform b." evidence="6">
    <original>M</original>
    <variation>MPRIERDDSSSGDTINSSAMEASTTDNGPLETTTDSNEPRPPPPLTNPTPRAPSVPPPMPPKRDLTPPRTCYDCGCFRNKILAPLNSSTPGASGPAPPANTTSSTNRTVSQQDKLAAGTPGPHSSTHNIESSAFATADITLGFLLCGRLSFTTQVNNRVNVCGGTEM</variation>
    <location>
        <position position="1"/>
    </location>
</feature>
<keyword id="KW-0025">Alternative splicing</keyword>
<keyword id="KW-0342">GTP-binding</keyword>
<keyword id="KW-0460">Magnesium</keyword>
<keyword id="KW-0479">Metal-binding</keyword>
<keyword id="KW-0547">Nucleotide-binding</keyword>
<keyword id="KW-1185">Reference proteome</keyword>
<keyword id="KW-0807">Transducer</keyword>
<gene>
    <name type="primary">gpa-11</name>
    <name type="ORF">C16A11.1</name>
</gene>
<proteinExistence type="evidence at transcript level"/>
<accession>O76584</accession>
<accession>F0IWT4</accession>
<evidence type="ECO:0000250" key="1"/>
<evidence type="ECO:0000255" key="2">
    <source>
        <dbReference type="PROSITE-ProRule" id="PRU01230"/>
    </source>
</evidence>
<evidence type="ECO:0000269" key="3">
    <source>
    </source>
</evidence>
<evidence type="ECO:0000269" key="4">
    <source>
    </source>
</evidence>
<evidence type="ECO:0000269" key="5">
    <source>
    </source>
</evidence>
<evidence type="ECO:0000305" key="6"/>